<sequence>MKLELGNFYVEEIVFGEKTSFKDGVLTINKQEALDYVMEDENITHAELHIVKPGDMVRLCPVKEAIEPRIKLDGRTYFPGVTDEELTRCGEGRTHALKGCSVLVVGKHWGGFQDGLIDMGGEGAKYTYYSTLKNIVLVGDTNEDFEKNEQQKKNKALRWAGHKLAEYIGKTVKDMEPQEVETYELEPVTQRSEEVTKLPGVVFVMQPQSQMEELGYNDMVYGWDMNRMVPTYMHPNEVLDGAIISGSFMPCSSKWSTYDFQNFPALKRLYAEHGKTVNFLGVIMSNLNVALQQKQRSALFVAQMAKSLGAQGAIVAEEGYGNPDADFIACIVALENEGIKTVGLTNECTGRDGFSQPLVTLDEKANAIVSCGNVSELVELPPMPVVLGELEALARDGLSGGWAGDEILGSSVKADGSVIMENNAMFCGDQVVGWSTKTMKEF</sequence>
<name>GRDI_PEPAC</name>
<feature type="chain" id="PRO_0000083845" description="Betaine reductase complex component B subunit alpha">
    <location>
        <begin position="1"/>
        <end position="442"/>
    </location>
</feature>
<comment type="function">
    <text>In the first step of betaine reductase, the substrate is bound to component PB via a Schiff base intermediate. Then the PB-activated substrate is nucleophilically attacked by the selenol anion of component PA to transform it to a carboxymethylated selenoether and the respective amine. By action of component PC, acetyl phosphate is formed, leaving component PA in its oxidized state. Finally component PA becomes reduced by the thioredoxin system to start a new catalytic cycle of reductive deamination.</text>
</comment>
<comment type="catalytic activity">
    <reaction>
        <text>acetyl phosphate + trimethylamine + [thioredoxin]-disulfide + H2O = glycine betaine + [thioredoxin]-dithiol + phosphate + H(+)</text>
        <dbReference type="Rhea" id="RHEA:11848"/>
        <dbReference type="Rhea" id="RHEA-COMP:10698"/>
        <dbReference type="Rhea" id="RHEA-COMP:10700"/>
        <dbReference type="ChEBI" id="CHEBI:15377"/>
        <dbReference type="ChEBI" id="CHEBI:15378"/>
        <dbReference type="ChEBI" id="CHEBI:17750"/>
        <dbReference type="ChEBI" id="CHEBI:22191"/>
        <dbReference type="ChEBI" id="CHEBI:29950"/>
        <dbReference type="ChEBI" id="CHEBI:43474"/>
        <dbReference type="ChEBI" id="CHEBI:50058"/>
        <dbReference type="ChEBI" id="CHEBI:58389"/>
        <dbReference type="EC" id="1.21.4.4"/>
    </reaction>
</comment>
<comment type="subunit">
    <text>Heterotetramer of two alpha and two beta subunits. Component of the betaine reductase complex, together with components A and C. PB is substrate specific.</text>
</comment>
<gene>
    <name type="primary">grdI</name>
</gene>
<dbReference type="EC" id="1.21.4.4"/>
<dbReference type="EMBL" id="Y17145">
    <property type="protein sequence ID" value="CAA76650.1"/>
    <property type="molecule type" value="Genomic_DNA"/>
</dbReference>
<dbReference type="PIR" id="S63508">
    <property type="entry name" value="S63508"/>
</dbReference>
<dbReference type="GO" id="GO:0033795">
    <property type="term" value="F:betaine reductase activity"/>
    <property type="evidence" value="ECO:0007669"/>
    <property type="project" value="UniProtKB-EC"/>
</dbReference>
<dbReference type="InterPro" id="IPR016585">
    <property type="entry name" value="Gly/sarc/bet_Rdtase_B_asu/bsu"/>
</dbReference>
<dbReference type="InterPro" id="IPR015417">
    <property type="entry name" value="Gly_reductase_pB_sua/b"/>
</dbReference>
<dbReference type="Pfam" id="PF09338">
    <property type="entry name" value="Gly_reductase"/>
    <property type="match status" value="1"/>
</dbReference>
<dbReference type="PIRSF" id="PIRSF011588">
    <property type="entry name" value="Gly_sarc_betain_red_a/b"/>
    <property type="match status" value="1"/>
</dbReference>
<proteinExistence type="evidence at protein level"/>
<accession>O69406</accession>
<keyword id="KW-0903">Direct protein sequencing</keyword>
<keyword id="KW-0560">Oxidoreductase</keyword>
<protein>
    <recommendedName>
        <fullName>Betaine reductase complex component B subunit alpha</fullName>
        <ecNumber>1.21.4.4</ecNumber>
    </recommendedName>
    <alternativeName>
        <fullName>Selenoprotein PB alpha</fullName>
    </alternativeName>
</protein>
<organism>
    <name type="scientific">Peptoclostridium acidaminophilum</name>
    <name type="common">Eubacterium acidaminophilum</name>
    <dbReference type="NCBI Taxonomy" id="1731"/>
    <lineage>
        <taxon>Bacteria</taxon>
        <taxon>Bacillati</taxon>
        <taxon>Bacillota</taxon>
        <taxon>Clostridia</taxon>
        <taxon>Peptostreptococcales</taxon>
        <taxon>Peptoclostridiaceae</taxon>
        <taxon>Peptoclostridium</taxon>
    </lineage>
</organism>
<reference key="1">
    <citation type="submission" date="1998-04" db="EMBL/GenBank/DDBJ databases">
        <authorList>
            <person name="Sonntag D."/>
            <person name="Soehling B."/>
            <person name="Andreesen J.R."/>
        </authorList>
    </citation>
    <scope>NUCLEOTIDE SEQUENCE [GENOMIC DNA]</scope>
    <source>
        <strain>ATCC 49065 / DSM 3953 / al-2</strain>
    </source>
</reference>
<reference key="2">
    <citation type="journal article" date="1995" name="Eur. J. Biochem.">
        <title>Purification and characterization of protein PB of betaine reductase and its relationship to the corresponding proteins glycine reductase and sarcosine reductase from Eubacterium acidaminophilum.</title>
        <authorList>
            <person name="Meyer M."/>
            <person name="Granderath K."/>
            <person name="Andreesen J.R."/>
        </authorList>
    </citation>
    <scope>PROTEIN SEQUENCE OF 1-38</scope>
    <scope>CHARACTERIZATION</scope>
    <source>
        <strain>ATCC 49065 / DSM 3953 / al-2</strain>
    </source>
</reference>